<sequence>MVLAVLIGVLVGIVLVSSLLLRWNEVRYSRKQGLPPGTMGWPLFGETTEFLKQGPSFMKARRLRYGSLFRTHILGCPTVVCMDPELNRQMLQQGEGRGFVPGYPQSMLDILGRNNIAAVHGPLHRAMRGSMLALVRPASIRSSLLPKIDAFMRSHLHGWAGDLVDIQDKTKEMALLSALRQIAGITAGPLSDALKTELYTLVLGTISLPINLPGTSYYQGFQARKKLVSMLEKMIAERRSSGLVHNDMLDALLSGNDGTRERLSDEQIIDLIITLIYSGYETMSTTSMMAVKYLSDHPKALEELRKEHFDIRKGKSPEEAIDYNDFKSMTFTRAVIFETLRLATVVNGLLRKTTQDVEMNGYVIPKGWRIYVYTREINYDPCLYPDPMTFNPWRWLEKNMESHPHFMLFGGGGRMCPGKEVGTAEIATFLHYFVTRYRWEEEGTNTILKFPRVEAPNGLHIRVQNY</sequence>
<gene>
    <name evidence="4" type="primary">CYP85A1</name>
    <name evidence="6" type="ordered locus">BRADI_1g15030v3</name>
</gene>
<comment type="function">
    <text evidence="3">Involved in reduction steps of the biosynthesis of plant campesterol-derivative steroids, ending to castasterone (CS) but missing brassinolide (BL) (PubMed:32146811). Catalyzes the C6-oxidation step in brassinosteroids biosynthesis; the conversion of 6-deoxoteasterone (6-deoxoTE) to teasterone (TE), 3-dehydro-6-deoxoteasterone (6-deoxo3DT, 6-deoxo-3-DHT) to 3-dehydroteasterone (3DT, 3-DHT), 6-deoxotyphasterol (6-deoxoTY) to typhasterol (TY) and of 6-deoxocastasterone (6-deoxoCS) to castasterone (CS) (PubMed:32146811).</text>
</comment>
<comment type="catalytic activity">
    <reaction evidence="3">
        <text>6-deoxoteasterone + reduced [NADPH--hemoprotein reductase] + O2 = 6alpha-hydroxyteasterone + oxidized [NADPH--hemoprotein reductase] + H2O + H(+)</text>
        <dbReference type="Rhea" id="RHEA:69959"/>
        <dbReference type="Rhea" id="RHEA-COMP:11964"/>
        <dbReference type="Rhea" id="RHEA-COMP:11965"/>
        <dbReference type="ChEBI" id="CHEBI:15377"/>
        <dbReference type="ChEBI" id="CHEBI:15378"/>
        <dbReference type="ChEBI" id="CHEBI:15379"/>
        <dbReference type="ChEBI" id="CHEBI:20716"/>
        <dbReference type="ChEBI" id="CHEBI:57618"/>
        <dbReference type="ChEBI" id="CHEBI:58210"/>
        <dbReference type="ChEBI" id="CHEBI:188499"/>
    </reaction>
    <physiologicalReaction direction="left-to-right" evidence="3">
        <dbReference type="Rhea" id="RHEA:69960"/>
    </physiologicalReaction>
</comment>
<comment type="catalytic activity">
    <reaction evidence="3">
        <text>6alpha-hydroxytyphasterol + reduced [NADPH--hemoprotein reductase] + O2 = teasterone + oxidized [NADPH--hemoprotein reductase] + 2 H2O + H(+)</text>
        <dbReference type="Rhea" id="RHEA:69963"/>
        <dbReference type="Rhea" id="RHEA-COMP:11964"/>
        <dbReference type="Rhea" id="RHEA-COMP:11965"/>
        <dbReference type="ChEBI" id="CHEBI:15377"/>
        <dbReference type="ChEBI" id="CHEBI:15378"/>
        <dbReference type="ChEBI" id="CHEBI:15379"/>
        <dbReference type="ChEBI" id="CHEBI:26863"/>
        <dbReference type="ChEBI" id="CHEBI:57618"/>
        <dbReference type="ChEBI" id="CHEBI:58210"/>
        <dbReference type="ChEBI" id="CHEBI:188495"/>
    </reaction>
    <physiologicalReaction direction="left-to-right" evidence="3">
        <dbReference type="Rhea" id="RHEA:69964"/>
    </physiologicalReaction>
</comment>
<comment type="catalytic activity">
    <reaction evidence="3">
        <text>3-dehydro-6-deoxoteasterone + reduced [NADPH--hemoprotein reductase] + O2 = 3-dehydro-6alpha-hydroxyteasterone + oxidized [NADPH--hemoprotein reductase] + H2O + H(+)</text>
        <dbReference type="Rhea" id="RHEA:69947"/>
        <dbReference type="Rhea" id="RHEA-COMP:11964"/>
        <dbReference type="Rhea" id="RHEA-COMP:11965"/>
        <dbReference type="ChEBI" id="CHEBI:15377"/>
        <dbReference type="ChEBI" id="CHEBI:15378"/>
        <dbReference type="ChEBI" id="CHEBI:15379"/>
        <dbReference type="ChEBI" id="CHEBI:20710"/>
        <dbReference type="ChEBI" id="CHEBI:57618"/>
        <dbReference type="ChEBI" id="CHEBI:58210"/>
        <dbReference type="ChEBI" id="CHEBI:188496"/>
    </reaction>
    <physiologicalReaction direction="left-to-right" evidence="3">
        <dbReference type="Rhea" id="RHEA:69948"/>
    </physiologicalReaction>
</comment>
<comment type="catalytic activity">
    <reaction evidence="3">
        <text>3-dehydro-6alpha-hydroxyteasterone + reduced [NADPH--hemoprotein reductase] + O2 = 3-dehydroteasterone + oxidized [NADPH--hemoprotein reductase] + 2 H2O + H(+)</text>
        <dbReference type="Rhea" id="RHEA:69951"/>
        <dbReference type="Rhea" id="RHEA-COMP:11964"/>
        <dbReference type="Rhea" id="RHEA-COMP:11965"/>
        <dbReference type="ChEBI" id="CHEBI:15377"/>
        <dbReference type="ChEBI" id="CHEBI:15378"/>
        <dbReference type="ChEBI" id="CHEBI:15379"/>
        <dbReference type="ChEBI" id="CHEBI:20000"/>
        <dbReference type="ChEBI" id="CHEBI:57618"/>
        <dbReference type="ChEBI" id="CHEBI:58210"/>
        <dbReference type="ChEBI" id="CHEBI:188496"/>
    </reaction>
    <physiologicalReaction direction="left-to-right" evidence="3">
        <dbReference type="Rhea" id="RHEA:69952"/>
    </physiologicalReaction>
</comment>
<comment type="catalytic activity">
    <reaction evidence="3">
        <text>6-deoxotyphasterol + reduced [NADPH--hemoprotein reductase] + O2 = 6alpha-hydroxytyphasterol + oxidized [NADPH--hemoprotein reductase] + H2O + H(+)</text>
        <dbReference type="Rhea" id="RHEA:69939"/>
        <dbReference type="Rhea" id="RHEA-COMP:11964"/>
        <dbReference type="Rhea" id="RHEA-COMP:11965"/>
        <dbReference type="ChEBI" id="CHEBI:15377"/>
        <dbReference type="ChEBI" id="CHEBI:15378"/>
        <dbReference type="ChEBI" id="CHEBI:15379"/>
        <dbReference type="ChEBI" id="CHEBI:20717"/>
        <dbReference type="ChEBI" id="CHEBI:57618"/>
        <dbReference type="ChEBI" id="CHEBI:58210"/>
        <dbReference type="ChEBI" id="CHEBI:188495"/>
    </reaction>
    <physiologicalReaction direction="left-to-right" evidence="3">
        <dbReference type="Rhea" id="RHEA:69940"/>
    </physiologicalReaction>
</comment>
<comment type="catalytic activity">
    <reaction evidence="3">
        <text>6alpha-hydroxytyphasterol + reduced [NADPH--hemoprotein reductase] + O2 = typhasterol + oxidized [NADPH--hemoprotein reductase] + 2 H2O + H(+)</text>
        <dbReference type="Rhea" id="RHEA:69943"/>
        <dbReference type="Rhea" id="RHEA-COMP:11964"/>
        <dbReference type="Rhea" id="RHEA-COMP:11965"/>
        <dbReference type="ChEBI" id="CHEBI:15377"/>
        <dbReference type="ChEBI" id="CHEBI:15378"/>
        <dbReference type="ChEBI" id="CHEBI:15379"/>
        <dbReference type="ChEBI" id="CHEBI:27173"/>
        <dbReference type="ChEBI" id="CHEBI:57618"/>
        <dbReference type="ChEBI" id="CHEBI:58210"/>
        <dbReference type="ChEBI" id="CHEBI:188495"/>
    </reaction>
    <physiologicalReaction direction="left-to-right" evidence="3">
        <dbReference type="Rhea" id="RHEA:69944"/>
    </physiologicalReaction>
</comment>
<comment type="catalytic activity">
    <reaction evidence="3">
        <text>6-deoxocastasterone + reduced [NADPH--hemoprotein reductase] + O2 = 6alpha-hydroxycastasterone + oxidized [NADPH--hemoprotein reductase] + H2O + H(+)</text>
        <dbReference type="Rhea" id="RHEA:69875"/>
        <dbReference type="Rhea" id="RHEA-COMP:11964"/>
        <dbReference type="Rhea" id="RHEA-COMP:11965"/>
        <dbReference type="ChEBI" id="CHEBI:15377"/>
        <dbReference type="ChEBI" id="CHEBI:15378"/>
        <dbReference type="ChEBI" id="CHEBI:15379"/>
        <dbReference type="ChEBI" id="CHEBI:20712"/>
        <dbReference type="ChEBI" id="CHEBI:20760"/>
        <dbReference type="ChEBI" id="CHEBI:57618"/>
        <dbReference type="ChEBI" id="CHEBI:58210"/>
    </reaction>
    <physiologicalReaction direction="left-to-right" evidence="3">
        <dbReference type="Rhea" id="RHEA:69876"/>
    </physiologicalReaction>
</comment>
<comment type="catalytic activity">
    <reaction evidence="3">
        <text>6alpha-hydroxycastasterone + reduced [NADPH--hemoprotein reductase] + O2 = castasterone + oxidized [NADPH--hemoprotein reductase] + 2 H2O + H(+)</text>
        <dbReference type="Rhea" id="RHEA:69879"/>
        <dbReference type="Rhea" id="RHEA-COMP:11964"/>
        <dbReference type="Rhea" id="RHEA-COMP:11965"/>
        <dbReference type="ChEBI" id="CHEBI:15377"/>
        <dbReference type="ChEBI" id="CHEBI:15378"/>
        <dbReference type="ChEBI" id="CHEBI:15379"/>
        <dbReference type="ChEBI" id="CHEBI:20760"/>
        <dbReference type="ChEBI" id="CHEBI:23051"/>
        <dbReference type="ChEBI" id="CHEBI:57618"/>
        <dbReference type="ChEBI" id="CHEBI:58210"/>
    </reaction>
    <physiologicalReaction direction="left-to-right" evidence="3">
        <dbReference type="Rhea" id="RHEA:69880"/>
    </physiologicalReaction>
</comment>
<comment type="catalytic activity">
    <reaction evidence="3">
        <text>3-dehydro-6-deoxoteasterone + 2 reduced [NADPH--hemoprotein reductase] + 2 O2 = 3-dehydroteasterone + 2 oxidized [NADPH--hemoprotein reductase] + 3 H2O + 2 H(+)</text>
        <dbReference type="Rhea" id="RHEA:70039"/>
        <dbReference type="Rhea" id="RHEA-COMP:11964"/>
        <dbReference type="Rhea" id="RHEA-COMP:11965"/>
        <dbReference type="ChEBI" id="CHEBI:15377"/>
        <dbReference type="ChEBI" id="CHEBI:15378"/>
        <dbReference type="ChEBI" id="CHEBI:15379"/>
        <dbReference type="ChEBI" id="CHEBI:20000"/>
        <dbReference type="ChEBI" id="CHEBI:20710"/>
        <dbReference type="ChEBI" id="CHEBI:57618"/>
        <dbReference type="ChEBI" id="CHEBI:58210"/>
    </reaction>
    <physiologicalReaction direction="left-to-right" evidence="3">
        <dbReference type="Rhea" id="RHEA:70040"/>
    </physiologicalReaction>
</comment>
<comment type="catalytic activity">
    <reaction evidence="3">
        <text>6-deoxocastasterone + 2 reduced [NADPH--hemoprotein reductase] + 2 O2 = castasterone + 2 oxidized [NADPH--hemoprotein reductase] + 3 H2O + 2 H(+)</text>
        <dbReference type="Rhea" id="RHEA:70031"/>
        <dbReference type="Rhea" id="RHEA-COMP:11964"/>
        <dbReference type="Rhea" id="RHEA-COMP:11965"/>
        <dbReference type="ChEBI" id="CHEBI:15377"/>
        <dbReference type="ChEBI" id="CHEBI:15378"/>
        <dbReference type="ChEBI" id="CHEBI:15379"/>
        <dbReference type="ChEBI" id="CHEBI:20712"/>
        <dbReference type="ChEBI" id="CHEBI:23051"/>
        <dbReference type="ChEBI" id="CHEBI:57618"/>
        <dbReference type="ChEBI" id="CHEBI:58210"/>
    </reaction>
    <physiologicalReaction direction="left-to-right" evidence="3">
        <dbReference type="Rhea" id="RHEA:70032"/>
    </physiologicalReaction>
</comment>
<comment type="catalytic activity">
    <reaction evidence="3">
        <text>6-deoxoteasterone + 2 reduced [NADPH--hemoprotein reductase] + 2 O2 = teasterone + 2 oxidized [NADPH--hemoprotein reductase] + 3 H2O + 2 H(+)</text>
        <dbReference type="Rhea" id="RHEA:70043"/>
        <dbReference type="Rhea" id="RHEA-COMP:11964"/>
        <dbReference type="Rhea" id="RHEA-COMP:11965"/>
        <dbReference type="ChEBI" id="CHEBI:15377"/>
        <dbReference type="ChEBI" id="CHEBI:15378"/>
        <dbReference type="ChEBI" id="CHEBI:15379"/>
        <dbReference type="ChEBI" id="CHEBI:20716"/>
        <dbReference type="ChEBI" id="CHEBI:26863"/>
        <dbReference type="ChEBI" id="CHEBI:57618"/>
        <dbReference type="ChEBI" id="CHEBI:58210"/>
    </reaction>
    <physiologicalReaction direction="left-to-right" evidence="3">
        <dbReference type="Rhea" id="RHEA:70044"/>
    </physiologicalReaction>
</comment>
<comment type="catalytic activity">
    <reaction evidence="3">
        <text>6-deoxotyphasterol + 2 reduced [NADPH--hemoprotein reductase] + 2 O2 = typhasterol + 2 oxidized [NADPH--hemoprotein reductase] + 3 H2O + 2 H(+)</text>
        <dbReference type="Rhea" id="RHEA:70035"/>
        <dbReference type="Rhea" id="RHEA-COMP:11964"/>
        <dbReference type="Rhea" id="RHEA-COMP:11965"/>
        <dbReference type="ChEBI" id="CHEBI:15377"/>
        <dbReference type="ChEBI" id="CHEBI:15378"/>
        <dbReference type="ChEBI" id="CHEBI:15379"/>
        <dbReference type="ChEBI" id="CHEBI:20717"/>
        <dbReference type="ChEBI" id="CHEBI:27173"/>
        <dbReference type="ChEBI" id="CHEBI:57618"/>
        <dbReference type="ChEBI" id="CHEBI:58210"/>
    </reaction>
    <physiologicalReaction direction="left-to-right" evidence="3">
        <dbReference type="Rhea" id="RHEA:70036"/>
    </physiologicalReaction>
</comment>
<comment type="cofactor">
    <cofactor evidence="1">
        <name>heme</name>
        <dbReference type="ChEBI" id="CHEBI:30413"/>
    </cofactor>
</comment>
<comment type="pathway">
    <text evidence="3">Plant hormone biosynthesis; brassinosteroid biosynthesis.</text>
</comment>
<comment type="subcellular location">
    <subcellularLocation>
        <location evidence="2">Membrane</location>
        <topology evidence="2">Single-pass membrane protein</topology>
    </subcellularLocation>
</comment>
<comment type="similarity">
    <text evidence="5">Belongs to the cytochrome P450 family.</text>
</comment>
<proteinExistence type="evidence at protein level"/>
<organism>
    <name type="scientific">Brachypodium distachyon</name>
    <name type="common">Purple false brome</name>
    <name type="synonym">Trachynia distachya</name>
    <dbReference type="NCBI Taxonomy" id="15368"/>
    <lineage>
        <taxon>Eukaryota</taxon>
        <taxon>Viridiplantae</taxon>
        <taxon>Streptophyta</taxon>
        <taxon>Embryophyta</taxon>
        <taxon>Tracheophyta</taxon>
        <taxon>Spermatophyta</taxon>
        <taxon>Magnoliopsida</taxon>
        <taxon>Liliopsida</taxon>
        <taxon>Poales</taxon>
        <taxon>Poaceae</taxon>
        <taxon>BOP clade</taxon>
        <taxon>Pooideae</taxon>
        <taxon>Stipodae</taxon>
        <taxon>Brachypodieae</taxon>
        <taxon>Brachypodium</taxon>
    </lineage>
</organism>
<evidence type="ECO:0000250" key="1">
    <source>
        <dbReference type="UniProtKB" id="P04798"/>
    </source>
</evidence>
<evidence type="ECO:0000255" key="2"/>
<evidence type="ECO:0000269" key="3">
    <source>
    </source>
</evidence>
<evidence type="ECO:0000303" key="4">
    <source>
    </source>
</evidence>
<evidence type="ECO:0000305" key="5"/>
<evidence type="ECO:0000312" key="6">
    <source>
        <dbReference type="EMBL" id="KQK14264.1"/>
    </source>
</evidence>
<accession>I1GQE7</accession>
<name>C85A1_BRADI</name>
<dbReference type="EC" id="1.14.14.-" evidence="3"/>
<dbReference type="EMBL" id="CM000880">
    <property type="protein sequence ID" value="KQK14264.1"/>
    <property type="molecule type" value="Genomic_DNA"/>
</dbReference>
<dbReference type="RefSeq" id="XP_003562306.1">
    <property type="nucleotide sequence ID" value="XM_003562258.3"/>
</dbReference>
<dbReference type="SMR" id="I1GQE7"/>
<dbReference type="FunCoup" id="I1GQE7">
    <property type="interactions" value="273"/>
</dbReference>
<dbReference type="STRING" id="15368.I1GQE7"/>
<dbReference type="EnsemblPlants" id="KQK14264">
    <property type="protein sequence ID" value="KQK14264"/>
    <property type="gene ID" value="BRADI_1g15030v3"/>
</dbReference>
<dbReference type="GeneID" id="100837653"/>
<dbReference type="Gramene" id="KQK14264">
    <property type="protein sequence ID" value="KQK14264"/>
    <property type="gene ID" value="BRADI_1g15030v3"/>
</dbReference>
<dbReference type="KEGG" id="bdi:100837653"/>
<dbReference type="eggNOG" id="KOG0157">
    <property type="taxonomic scope" value="Eukaryota"/>
</dbReference>
<dbReference type="HOGENOM" id="CLU_001570_15_5_1"/>
<dbReference type="InParanoid" id="I1GQE7"/>
<dbReference type="OMA" id="NQVKYNN"/>
<dbReference type="OrthoDB" id="1372046at2759"/>
<dbReference type="UniPathway" id="UPA00381"/>
<dbReference type="Proteomes" id="UP000008810">
    <property type="component" value="Chromosome 1"/>
</dbReference>
<dbReference type="GO" id="GO:0016020">
    <property type="term" value="C:membrane"/>
    <property type="evidence" value="ECO:0007669"/>
    <property type="project" value="UniProtKB-SubCell"/>
</dbReference>
<dbReference type="GO" id="GO:0020037">
    <property type="term" value="F:heme binding"/>
    <property type="evidence" value="ECO:0007669"/>
    <property type="project" value="InterPro"/>
</dbReference>
<dbReference type="GO" id="GO:0005506">
    <property type="term" value="F:iron ion binding"/>
    <property type="evidence" value="ECO:0007669"/>
    <property type="project" value="InterPro"/>
</dbReference>
<dbReference type="GO" id="GO:0004497">
    <property type="term" value="F:monooxygenase activity"/>
    <property type="evidence" value="ECO:0000318"/>
    <property type="project" value="GO_Central"/>
</dbReference>
<dbReference type="GO" id="GO:0016705">
    <property type="term" value="F:oxidoreductase activity, acting on paired donors, with incorporation or reduction of molecular oxygen"/>
    <property type="evidence" value="ECO:0007669"/>
    <property type="project" value="InterPro"/>
</dbReference>
<dbReference type="GO" id="GO:0016132">
    <property type="term" value="P:brassinosteroid biosynthetic process"/>
    <property type="evidence" value="ECO:0000318"/>
    <property type="project" value="GO_Central"/>
</dbReference>
<dbReference type="GO" id="GO:0010268">
    <property type="term" value="P:brassinosteroid homeostasis"/>
    <property type="evidence" value="ECO:0000318"/>
    <property type="project" value="GO_Central"/>
</dbReference>
<dbReference type="GO" id="GO:0001578">
    <property type="term" value="P:microtubule bundle formation"/>
    <property type="evidence" value="ECO:0007669"/>
    <property type="project" value="EnsemblPlants"/>
</dbReference>
<dbReference type="GO" id="GO:0009647">
    <property type="term" value="P:skotomorphogenesis"/>
    <property type="evidence" value="ECO:0007669"/>
    <property type="project" value="EnsemblPlants"/>
</dbReference>
<dbReference type="CDD" id="cd11043">
    <property type="entry name" value="CYP90-like"/>
    <property type="match status" value="1"/>
</dbReference>
<dbReference type="FunFam" id="1.10.630.10:FF:000045">
    <property type="entry name" value="Cytochrome P450 85A1"/>
    <property type="match status" value="1"/>
</dbReference>
<dbReference type="Gene3D" id="1.10.630.10">
    <property type="entry name" value="Cytochrome P450"/>
    <property type="match status" value="1"/>
</dbReference>
<dbReference type="InterPro" id="IPR001128">
    <property type="entry name" value="Cyt_P450"/>
</dbReference>
<dbReference type="InterPro" id="IPR017972">
    <property type="entry name" value="Cyt_P450_CS"/>
</dbReference>
<dbReference type="InterPro" id="IPR002401">
    <property type="entry name" value="Cyt_P450_E_grp-I"/>
</dbReference>
<dbReference type="InterPro" id="IPR036396">
    <property type="entry name" value="Cyt_P450_sf"/>
</dbReference>
<dbReference type="PANTHER" id="PTHR24286">
    <property type="entry name" value="CYTOCHROME P450 26"/>
    <property type="match status" value="1"/>
</dbReference>
<dbReference type="PANTHER" id="PTHR24286:SF169">
    <property type="entry name" value="CYTOCHROME P450 85A1"/>
    <property type="match status" value="1"/>
</dbReference>
<dbReference type="Pfam" id="PF00067">
    <property type="entry name" value="p450"/>
    <property type="match status" value="1"/>
</dbReference>
<dbReference type="PRINTS" id="PR00463">
    <property type="entry name" value="EP450I"/>
</dbReference>
<dbReference type="PRINTS" id="PR00385">
    <property type="entry name" value="P450"/>
</dbReference>
<dbReference type="SUPFAM" id="SSF48264">
    <property type="entry name" value="Cytochrome P450"/>
    <property type="match status" value="1"/>
</dbReference>
<dbReference type="PROSITE" id="PS00086">
    <property type="entry name" value="CYTOCHROME_P450"/>
    <property type="match status" value="1"/>
</dbReference>
<protein>
    <recommendedName>
        <fullName evidence="5">Cytochrome P450 85A1</fullName>
        <shortName evidence="4">BdCYP85A1</shortName>
    </recommendedName>
    <alternativeName>
        <fullName evidence="4">3-dehydroteasterone synthase</fullName>
        <ecNumber evidence="3">1.14.14.-</ecNumber>
    </alternativeName>
    <alternativeName>
        <fullName evidence="4">Castasterone synthase</fullName>
        <ecNumber evidence="3">1.14.14.-</ecNumber>
    </alternativeName>
    <alternativeName>
        <fullName evidence="4">Teasterone synthase</fullName>
        <ecNumber evidence="3">1.14.14.-</ecNumber>
    </alternativeName>
    <alternativeName>
        <fullName evidence="4">Typhasterol synthase</fullName>
        <ecNumber evidence="3">1.14.14.-</ecNumber>
    </alternativeName>
</protein>
<reference key="1">
    <citation type="journal article" date="2010" name="Nature">
        <title>Genome sequencing and analysis of the model grass Brachypodium distachyon.</title>
        <authorList>
            <consortium name="International Brachypodium Initiative"/>
        </authorList>
    </citation>
    <scope>NUCLEOTIDE SEQUENCE [LARGE SCALE GENOMIC DNA]</scope>
    <source>
        <strain>cv. Bd21</strain>
    </source>
</reference>
<reference key="2">
    <citation type="journal article" date="2020" name="J. Agric. Food Chem.">
        <title>Establishment of biosynthetic pathways to generate castasterone as the biologically active brassinosteroid in Brachypodium distachyon.</title>
        <authorList>
            <person name="Roh J."/>
            <person name="Moon J."/>
            <person name="Youn J.-H."/>
            <person name="Seo C."/>
            <person name="Park Y.J."/>
            <person name="Kim S.-K."/>
        </authorList>
    </citation>
    <scope>FUNCTION</scope>
    <scope>CATALYTIC ACTIVITY</scope>
    <scope>PATHWAY</scope>
</reference>
<keyword id="KW-0349">Heme</keyword>
<keyword id="KW-0408">Iron</keyword>
<keyword id="KW-0472">Membrane</keyword>
<keyword id="KW-0479">Metal-binding</keyword>
<keyword id="KW-0503">Monooxygenase</keyword>
<keyword id="KW-0560">Oxidoreductase</keyword>
<keyword id="KW-1185">Reference proteome</keyword>
<keyword id="KW-0812">Transmembrane</keyword>
<keyword id="KW-1133">Transmembrane helix</keyword>
<feature type="chain" id="PRO_0000455311" description="Cytochrome P450 85A1">
    <location>
        <begin position="1"/>
        <end position="466"/>
    </location>
</feature>
<feature type="transmembrane region" description="Helical" evidence="2">
    <location>
        <begin position="1"/>
        <end position="21"/>
    </location>
</feature>
<feature type="binding site" description="axial binding residue" evidence="1">
    <location>
        <position position="416"/>
    </location>
    <ligand>
        <name>heme</name>
        <dbReference type="ChEBI" id="CHEBI:30413"/>
    </ligand>
    <ligandPart>
        <name>Fe</name>
        <dbReference type="ChEBI" id="CHEBI:18248"/>
    </ligandPart>
</feature>